<feature type="chain" id="PRO_0000204417" description="Malonyl-[acyl-carrier protein] O-methyltransferase">
    <location>
        <begin position="1"/>
        <end position="251"/>
    </location>
</feature>
<proteinExistence type="inferred from homology"/>
<accession>O06898</accession>
<gene>
    <name evidence="1" type="primary">bioC</name>
</gene>
<organism>
    <name type="scientific">Pseudescherichia vulneris</name>
    <name type="common">Escherichia vulneris</name>
    <dbReference type="NCBI Taxonomy" id="566"/>
    <lineage>
        <taxon>Bacteria</taxon>
        <taxon>Pseudomonadati</taxon>
        <taxon>Pseudomonadota</taxon>
        <taxon>Gammaproteobacteria</taxon>
        <taxon>Enterobacterales</taxon>
        <taxon>Enterobacteriaceae</taxon>
        <taxon>Pseudescherichia</taxon>
    </lineage>
</organism>
<keyword id="KW-0093">Biotin biosynthesis</keyword>
<keyword id="KW-0489">Methyltransferase</keyword>
<keyword id="KW-0949">S-adenosyl-L-methionine</keyword>
<keyword id="KW-0808">Transferase</keyword>
<dbReference type="EC" id="2.1.1.197" evidence="1"/>
<dbReference type="EMBL" id="U51207">
    <property type="protein sequence ID" value="AAB52911.1"/>
    <property type="molecule type" value="Genomic_DNA"/>
</dbReference>
<dbReference type="UniPathway" id="UPA00078"/>
<dbReference type="GO" id="GO:0010340">
    <property type="term" value="F:carboxyl-O-methyltransferase activity"/>
    <property type="evidence" value="ECO:0007669"/>
    <property type="project" value="UniProtKB-UniRule"/>
</dbReference>
<dbReference type="GO" id="GO:0102130">
    <property type="term" value="F:malonyl-CoA methyltransferase activity"/>
    <property type="evidence" value="ECO:0007669"/>
    <property type="project" value="UniProtKB-EC"/>
</dbReference>
<dbReference type="GO" id="GO:0008757">
    <property type="term" value="F:S-adenosylmethionine-dependent methyltransferase activity"/>
    <property type="evidence" value="ECO:0007669"/>
    <property type="project" value="InterPro"/>
</dbReference>
<dbReference type="GO" id="GO:0009102">
    <property type="term" value="P:biotin biosynthetic process"/>
    <property type="evidence" value="ECO:0007669"/>
    <property type="project" value="UniProtKB-UniRule"/>
</dbReference>
<dbReference type="GO" id="GO:0032259">
    <property type="term" value="P:methylation"/>
    <property type="evidence" value="ECO:0007669"/>
    <property type="project" value="UniProtKB-KW"/>
</dbReference>
<dbReference type="CDD" id="cd02440">
    <property type="entry name" value="AdoMet_MTases"/>
    <property type="match status" value="1"/>
</dbReference>
<dbReference type="Gene3D" id="3.40.50.150">
    <property type="entry name" value="Vaccinia Virus protein VP39"/>
    <property type="match status" value="1"/>
</dbReference>
<dbReference type="HAMAP" id="MF_00835">
    <property type="entry name" value="BioC"/>
    <property type="match status" value="1"/>
</dbReference>
<dbReference type="InterPro" id="IPR011814">
    <property type="entry name" value="BioC"/>
</dbReference>
<dbReference type="InterPro" id="IPR013216">
    <property type="entry name" value="Methyltransf_11"/>
</dbReference>
<dbReference type="InterPro" id="IPR029063">
    <property type="entry name" value="SAM-dependent_MTases_sf"/>
</dbReference>
<dbReference type="NCBIfam" id="TIGR02072">
    <property type="entry name" value="BioC"/>
    <property type="match status" value="1"/>
</dbReference>
<dbReference type="NCBIfam" id="NF007610">
    <property type="entry name" value="PRK10258.1"/>
    <property type="match status" value="1"/>
</dbReference>
<dbReference type="PANTHER" id="PTHR43861:SF1">
    <property type="entry name" value="TRANS-ACONITATE 2-METHYLTRANSFERASE"/>
    <property type="match status" value="1"/>
</dbReference>
<dbReference type="PANTHER" id="PTHR43861">
    <property type="entry name" value="TRANS-ACONITATE 2-METHYLTRANSFERASE-RELATED"/>
    <property type="match status" value="1"/>
</dbReference>
<dbReference type="Pfam" id="PF08241">
    <property type="entry name" value="Methyltransf_11"/>
    <property type="match status" value="1"/>
</dbReference>
<dbReference type="SUPFAM" id="SSF53335">
    <property type="entry name" value="S-adenosyl-L-methionine-dependent methyltransferases"/>
    <property type="match status" value="1"/>
</dbReference>
<name>BIOC_PSEVU</name>
<comment type="function">
    <text evidence="1">Converts the free carboxyl group of a malonyl-thioester to its methyl ester by transfer of a methyl group from S-adenosyl-L-methionine (SAM). It allows to synthesize pimeloyl-ACP via the fatty acid synthetic pathway.</text>
</comment>
<comment type="catalytic activity">
    <reaction evidence="1">
        <text>malonyl-[ACP] + S-adenosyl-L-methionine = malonyl-[ACP] methyl ester + S-adenosyl-L-homocysteine</text>
        <dbReference type="Rhea" id="RHEA:17105"/>
        <dbReference type="Rhea" id="RHEA-COMP:9623"/>
        <dbReference type="Rhea" id="RHEA-COMP:9954"/>
        <dbReference type="ChEBI" id="CHEBI:57856"/>
        <dbReference type="ChEBI" id="CHEBI:59789"/>
        <dbReference type="ChEBI" id="CHEBI:78449"/>
        <dbReference type="ChEBI" id="CHEBI:78845"/>
        <dbReference type="EC" id="2.1.1.197"/>
    </reaction>
</comment>
<comment type="pathway">
    <text evidence="1">Cofactor biosynthesis; biotin biosynthesis.</text>
</comment>
<comment type="similarity">
    <text evidence="1">Belongs to the methyltransferase superfamily.</text>
</comment>
<reference key="1">
    <citation type="journal article" date="1997" name="Biochem. Mol. Biol. Int.">
        <title>Molecular cloning and nucleotide sequencing of bioF (7-keto-8-amino pelargonic acid synthetase), bioC and bioD (dethiobiotin synthetase) genes of Erwinia herbicola.</title>
        <authorList>
            <person name="Wu C.H."/>
            <person name="Bao Y.Y."/>
            <person name="Shao C.P."/>
            <person name="Shiuan D."/>
        </authorList>
    </citation>
    <scope>NUCLEOTIDE SEQUENCE [GENOMIC DNA]</scope>
    <source>
        <strain>ATCC 39368 / Eho10</strain>
    </source>
</reference>
<protein>
    <recommendedName>
        <fullName evidence="1">Malonyl-[acyl-carrier protein] O-methyltransferase</fullName>
        <shortName evidence="1">Malonyl-ACP O-methyltransferase</shortName>
        <ecNumber evidence="1">2.1.1.197</ecNumber>
    </recommendedName>
    <alternativeName>
        <fullName evidence="1">Biotin synthesis protein BioC</fullName>
    </alternativeName>
</protein>
<evidence type="ECO:0000255" key="1">
    <source>
        <dbReference type="HAMAP-Rule" id="MF_00835"/>
    </source>
</evidence>
<sequence length="251" mass="27411">MSLVNKRAVAAAFGRAAQSYDSHAQLQRQSADLLLAKLGERRPASVLDAGCGPGSMSRYWRDAGAEVTALDLSLPMLRQAQSQQAAQHYVAADIEALPLADARFDLAWSNLAVQWCNDLGQALKSLHRVVRPGGAVAFTTLASGSLPELHQAWQAVDSRLHANRFLAEETLAETVSAWRGQWGIEPVTLAFDDALAAMRSLKGIGATHLHAGRHNTPLTRGQLQRLQLAWPQQQGRCLLTYSLFWGVIERD</sequence>